<protein>
    <recommendedName>
        <fullName evidence="1">Large ribosomal subunit protein uL6</fullName>
    </recommendedName>
    <alternativeName>
        <fullName evidence="2">50S ribosomal protein L6</fullName>
    </alternativeName>
</protein>
<reference key="1">
    <citation type="journal article" date="2005" name="Genome Res.">
        <title>Living with two extremes: conclusions from the genome sequence of Natronomonas pharaonis.</title>
        <authorList>
            <person name="Falb M."/>
            <person name="Pfeiffer F."/>
            <person name="Palm P."/>
            <person name="Rodewald K."/>
            <person name="Hickmann V."/>
            <person name="Tittor J."/>
            <person name="Oesterhelt D."/>
        </authorList>
    </citation>
    <scope>NUCLEOTIDE SEQUENCE [LARGE SCALE GENOMIC DNA]</scope>
    <source>
        <strain>ATCC 35678 / DSM 2160 / CIP 103997 / JCM 8858 / NBRC 14720 / NCIMB 2260 / Gabara</strain>
    </source>
</reference>
<name>RL6_NATPD</name>
<gene>
    <name evidence="1" type="primary">rpl6</name>
    <name type="ordered locus">NP_4886A</name>
</gene>
<sequence length="177" mass="19587">MRTEIEIPDEVTATMDHLEVTVEGPNGSVTRRLWYPDITVDVEDGAVVIETDDDNAKTRSTVGTFESHVTNMFHGVTEGWEYSMEVFYSHFPMQVSVEGGDIVIENFLGEKAPRKTPVRGDTSVEVDGEELTVSGPSIEDVGQTAADIEQLTRVSDKDTRVFQDGVYITETPDRGDV</sequence>
<evidence type="ECO:0000255" key="1">
    <source>
        <dbReference type="HAMAP-Rule" id="MF_01365"/>
    </source>
</evidence>
<evidence type="ECO:0000305" key="2"/>
<keyword id="KW-1185">Reference proteome</keyword>
<keyword id="KW-0687">Ribonucleoprotein</keyword>
<keyword id="KW-0689">Ribosomal protein</keyword>
<keyword id="KW-0694">RNA-binding</keyword>
<keyword id="KW-0699">rRNA-binding</keyword>
<accession>Q3IMX2</accession>
<feature type="chain" id="PRO_0000260993" description="Large ribosomal subunit protein uL6">
    <location>
        <begin position="1"/>
        <end position="177"/>
    </location>
</feature>
<dbReference type="EMBL" id="CR936257">
    <property type="protein sequence ID" value="CAI50534.1"/>
    <property type="molecule type" value="Genomic_DNA"/>
</dbReference>
<dbReference type="RefSeq" id="WP_011324146.1">
    <property type="nucleotide sequence ID" value="NC_007426.1"/>
</dbReference>
<dbReference type="SMR" id="Q3IMX2"/>
<dbReference type="STRING" id="348780.NP_4886A"/>
<dbReference type="EnsemblBacteria" id="CAI50534">
    <property type="protein sequence ID" value="CAI50534"/>
    <property type="gene ID" value="NP_4886A"/>
</dbReference>
<dbReference type="GeneID" id="3703147"/>
<dbReference type="KEGG" id="nph:NP_4886A"/>
<dbReference type="eggNOG" id="arCOG04090">
    <property type="taxonomic scope" value="Archaea"/>
</dbReference>
<dbReference type="HOGENOM" id="CLU_065464_0_0_2"/>
<dbReference type="OrthoDB" id="7144at2157"/>
<dbReference type="Proteomes" id="UP000002698">
    <property type="component" value="Chromosome"/>
</dbReference>
<dbReference type="GO" id="GO:0022625">
    <property type="term" value="C:cytosolic large ribosomal subunit"/>
    <property type="evidence" value="ECO:0007669"/>
    <property type="project" value="TreeGrafter"/>
</dbReference>
<dbReference type="GO" id="GO:0019843">
    <property type="term" value="F:rRNA binding"/>
    <property type="evidence" value="ECO:0007669"/>
    <property type="project" value="UniProtKB-UniRule"/>
</dbReference>
<dbReference type="GO" id="GO:0003735">
    <property type="term" value="F:structural constituent of ribosome"/>
    <property type="evidence" value="ECO:0007669"/>
    <property type="project" value="InterPro"/>
</dbReference>
<dbReference type="GO" id="GO:0002181">
    <property type="term" value="P:cytoplasmic translation"/>
    <property type="evidence" value="ECO:0007669"/>
    <property type="project" value="TreeGrafter"/>
</dbReference>
<dbReference type="FunFam" id="3.90.930.12:FF:000008">
    <property type="entry name" value="50S ribosomal protein L6"/>
    <property type="match status" value="1"/>
</dbReference>
<dbReference type="Gene3D" id="3.90.930.12">
    <property type="entry name" value="Ribosomal protein L6, alpha-beta domain"/>
    <property type="match status" value="2"/>
</dbReference>
<dbReference type="HAMAP" id="MF_01365_A">
    <property type="entry name" value="Ribosomal_uL6_A"/>
    <property type="match status" value="1"/>
</dbReference>
<dbReference type="InterPro" id="IPR000702">
    <property type="entry name" value="Ribosomal_uL6-like"/>
</dbReference>
<dbReference type="InterPro" id="IPR036789">
    <property type="entry name" value="Ribosomal_uL6-like_a/b-dom_sf"/>
</dbReference>
<dbReference type="InterPro" id="IPR020040">
    <property type="entry name" value="Ribosomal_uL6_a/b-dom"/>
</dbReference>
<dbReference type="InterPro" id="IPR019907">
    <property type="entry name" value="Ribosomal_uL6_arc"/>
</dbReference>
<dbReference type="NCBIfam" id="NF004037">
    <property type="entry name" value="PRK05518.1"/>
    <property type="match status" value="1"/>
</dbReference>
<dbReference type="NCBIfam" id="TIGR03653">
    <property type="entry name" value="uL6_arch"/>
    <property type="match status" value="1"/>
</dbReference>
<dbReference type="PANTHER" id="PTHR11655:SF16">
    <property type="entry name" value="60S RIBOSOMAL PROTEIN L9"/>
    <property type="match status" value="1"/>
</dbReference>
<dbReference type="PANTHER" id="PTHR11655">
    <property type="entry name" value="60S/50S RIBOSOMAL PROTEIN L6/L9"/>
    <property type="match status" value="1"/>
</dbReference>
<dbReference type="Pfam" id="PF00347">
    <property type="entry name" value="Ribosomal_L6"/>
    <property type="match status" value="2"/>
</dbReference>
<dbReference type="PIRSF" id="PIRSF002162">
    <property type="entry name" value="Ribosomal_L6"/>
    <property type="match status" value="1"/>
</dbReference>
<dbReference type="SUPFAM" id="SSF56053">
    <property type="entry name" value="Ribosomal protein L6"/>
    <property type="match status" value="2"/>
</dbReference>
<organism>
    <name type="scientific">Natronomonas pharaonis (strain ATCC 35678 / DSM 2160 / CIP 103997 / JCM 8858 / NBRC 14720 / NCIMB 2260 / Gabara)</name>
    <name type="common">Halobacterium pharaonis</name>
    <dbReference type="NCBI Taxonomy" id="348780"/>
    <lineage>
        <taxon>Archaea</taxon>
        <taxon>Methanobacteriati</taxon>
        <taxon>Methanobacteriota</taxon>
        <taxon>Stenosarchaea group</taxon>
        <taxon>Halobacteria</taxon>
        <taxon>Halobacteriales</taxon>
        <taxon>Haloarculaceae</taxon>
        <taxon>Natronomonas</taxon>
    </lineage>
</organism>
<proteinExistence type="inferred from homology"/>
<comment type="function">
    <text evidence="1">This protein binds to the 23S rRNA, and is important in its secondary structure. It is located near the subunit interface in the base of the L7/L12 stalk, and near the tRNA binding site of the peptidyltransferase center.</text>
</comment>
<comment type="subunit">
    <text evidence="1">Part of the 50S ribosomal subunit.</text>
</comment>
<comment type="similarity">
    <text evidence="1">Belongs to the universal ribosomal protein uL6 family.</text>
</comment>